<dbReference type="EC" id="2.4.2.10" evidence="1"/>
<dbReference type="EMBL" id="AE016877">
    <property type="protein sequence ID" value="AAP10803.1"/>
    <property type="molecule type" value="Genomic_DNA"/>
</dbReference>
<dbReference type="RefSeq" id="NP_833602.1">
    <property type="nucleotide sequence ID" value="NC_004722.1"/>
</dbReference>
<dbReference type="RefSeq" id="WP_000711440.1">
    <property type="nucleotide sequence ID" value="NZ_CP138336.1"/>
</dbReference>
<dbReference type="SMR" id="Q819S7"/>
<dbReference type="STRING" id="226900.BC_3882"/>
<dbReference type="KEGG" id="bce:BC3882"/>
<dbReference type="PATRIC" id="fig|226900.8.peg.4004"/>
<dbReference type="HOGENOM" id="CLU_074878_1_1_9"/>
<dbReference type="OrthoDB" id="9802134at2"/>
<dbReference type="UniPathway" id="UPA00070">
    <property type="reaction ID" value="UER00119"/>
</dbReference>
<dbReference type="Proteomes" id="UP000001417">
    <property type="component" value="Chromosome"/>
</dbReference>
<dbReference type="GO" id="GO:0000287">
    <property type="term" value="F:magnesium ion binding"/>
    <property type="evidence" value="ECO:0007669"/>
    <property type="project" value="UniProtKB-UniRule"/>
</dbReference>
<dbReference type="GO" id="GO:0004588">
    <property type="term" value="F:orotate phosphoribosyltransferase activity"/>
    <property type="evidence" value="ECO:0000318"/>
    <property type="project" value="GO_Central"/>
</dbReference>
<dbReference type="GO" id="GO:0044205">
    <property type="term" value="P:'de novo' UMP biosynthetic process"/>
    <property type="evidence" value="ECO:0007669"/>
    <property type="project" value="UniProtKB-UniRule"/>
</dbReference>
<dbReference type="GO" id="GO:0019856">
    <property type="term" value="P:pyrimidine nucleobase biosynthetic process"/>
    <property type="evidence" value="ECO:0000318"/>
    <property type="project" value="GO_Central"/>
</dbReference>
<dbReference type="GO" id="GO:0006222">
    <property type="term" value="P:UMP biosynthetic process"/>
    <property type="evidence" value="ECO:0000318"/>
    <property type="project" value="GO_Central"/>
</dbReference>
<dbReference type="CDD" id="cd06223">
    <property type="entry name" value="PRTases_typeI"/>
    <property type="match status" value="1"/>
</dbReference>
<dbReference type="Gene3D" id="3.40.50.2020">
    <property type="match status" value="1"/>
</dbReference>
<dbReference type="HAMAP" id="MF_01208">
    <property type="entry name" value="PyrE"/>
    <property type="match status" value="1"/>
</dbReference>
<dbReference type="InterPro" id="IPR023031">
    <property type="entry name" value="OPRT"/>
</dbReference>
<dbReference type="InterPro" id="IPR004467">
    <property type="entry name" value="Or_phspho_trans_dom"/>
</dbReference>
<dbReference type="InterPro" id="IPR000836">
    <property type="entry name" value="PRibTrfase_dom"/>
</dbReference>
<dbReference type="InterPro" id="IPR029057">
    <property type="entry name" value="PRTase-like"/>
</dbReference>
<dbReference type="NCBIfam" id="TIGR00336">
    <property type="entry name" value="pyrE"/>
    <property type="match status" value="1"/>
</dbReference>
<dbReference type="PANTHER" id="PTHR19278">
    <property type="entry name" value="OROTATE PHOSPHORIBOSYLTRANSFERASE"/>
    <property type="match status" value="1"/>
</dbReference>
<dbReference type="PANTHER" id="PTHR19278:SF9">
    <property type="entry name" value="URIDINE 5'-MONOPHOSPHATE SYNTHASE"/>
    <property type="match status" value="1"/>
</dbReference>
<dbReference type="Pfam" id="PF00156">
    <property type="entry name" value="Pribosyltran"/>
    <property type="match status" value="1"/>
</dbReference>
<dbReference type="SUPFAM" id="SSF53271">
    <property type="entry name" value="PRTase-like"/>
    <property type="match status" value="1"/>
</dbReference>
<dbReference type="PROSITE" id="PS00103">
    <property type="entry name" value="PUR_PYR_PR_TRANSFER"/>
    <property type="match status" value="1"/>
</dbReference>
<accession>Q819S7</accession>
<reference key="1">
    <citation type="journal article" date="2003" name="Nature">
        <title>Genome sequence of Bacillus cereus and comparative analysis with Bacillus anthracis.</title>
        <authorList>
            <person name="Ivanova N."/>
            <person name="Sorokin A."/>
            <person name="Anderson I."/>
            <person name="Galleron N."/>
            <person name="Candelon B."/>
            <person name="Kapatral V."/>
            <person name="Bhattacharyya A."/>
            <person name="Reznik G."/>
            <person name="Mikhailova N."/>
            <person name="Lapidus A."/>
            <person name="Chu L."/>
            <person name="Mazur M."/>
            <person name="Goltsman E."/>
            <person name="Larsen N."/>
            <person name="D'Souza M."/>
            <person name="Walunas T."/>
            <person name="Grechkin Y."/>
            <person name="Pusch G."/>
            <person name="Haselkorn R."/>
            <person name="Fonstein M."/>
            <person name="Ehrlich S.D."/>
            <person name="Overbeek R."/>
            <person name="Kyrpides N.C."/>
        </authorList>
    </citation>
    <scope>NUCLEOTIDE SEQUENCE [LARGE SCALE GENOMIC DNA]</scope>
    <source>
        <strain>ATCC 14579 / DSM 31 / CCUG 7414 / JCM 2152 / NBRC 15305 / NCIMB 9373 / NCTC 2599 / NRRL B-3711</strain>
    </source>
</reference>
<keyword id="KW-0328">Glycosyltransferase</keyword>
<keyword id="KW-0460">Magnesium</keyword>
<keyword id="KW-0665">Pyrimidine biosynthesis</keyword>
<keyword id="KW-1185">Reference proteome</keyword>
<keyword id="KW-0808">Transferase</keyword>
<name>PYRE_BACCR</name>
<feature type="chain" id="PRO_0000110668" description="Orotate phosphoribosyltransferase">
    <location>
        <begin position="1"/>
        <end position="210"/>
    </location>
</feature>
<feature type="binding site" evidence="1">
    <location>
        <position position="94"/>
    </location>
    <ligand>
        <name>5-phospho-alpha-D-ribose 1-diphosphate</name>
        <dbReference type="ChEBI" id="CHEBI:58017"/>
        <note>ligand shared between dimeric partners</note>
    </ligand>
</feature>
<feature type="binding site" evidence="1">
    <location>
        <position position="98"/>
    </location>
    <ligand>
        <name>5-phospho-alpha-D-ribose 1-diphosphate</name>
        <dbReference type="ChEBI" id="CHEBI:58017"/>
        <note>ligand shared between dimeric partners</note>
    </ligand>
</feature>
<feature type="binding site" evidence="1">
    <location>
        <position position="100"/>
    </location>
    <ligand>
        <name>5-phospho-alpha-D-ribose 1-diphosphate</name>
        <dbReference type="ChEBI" id="CHEBI:58017"/>
        <note>ligand shared between dimeric partners</note>
    </ligand>
</feature>
<feature type="binding site" description="in other chain" evidence="1">
    <location>
        <begin position="120"/>
        <end position="128"/>
    </location>
    <ligand>
        <name>5-phospho-alpha-D-ribose 1-diphosphate</name>
        <dbReference type="ChEBI" id="CHEBI:58017"/>
        <note>ligand shared between dimeric partners</note>
    </ligand>
</feature>
<feature type="binding site" evidence="1">
    <location>
        <position position="124"/>
    </location>
    <ligand>
        <name>orotate</name>
        <dbReference type="ChEBI" id="CHEBI:30839"/>
    </ligand>
</feature>
<gene>
    <name evidence="1" type="primary">pyrE</name>
    <name type="ordered locus">BC_3882</name>
</gene>
<organism>
    <name type="scientific">Bacillus cereus (strain ATCC 14579 / DSM 31 / CCUG 7414 / JCM 2152 / NBRC 15305 / NCIMB 9373 / NCTC 2599 / NRRL B-3711)</name>
    <dbReference type="NCBI Taxonomy" id="226900"/>
    <lineage>
        <taxon>Bacteria</taxon>
        <taxon>Bacillati</taxon>
        <taxon>Bacillota</taxon>
        <taxon>Bacilli</taxon>
        <taxon>Bacillales</taxon>
        <taxon>Bacillaceae</taxon>
        <taxon>Bacillus</taxon>
        <taxon>Bacillus cereus group</taxon>
    </lineage>
</organism>
<proteinExistence type="inferred from homology"/>
<protein>
    <recommendedName>
        <fullName evidence="1">Orotate phosphoribosyltransferase</fullName>
        <shortName evidence="1">OPRT</shortName>
        <shortName evidence="1">OPRTase</shortName>
        <ecNumber evidence="1">2.4.2.10</ecNumber>
    </recommendedName>
</protein>
<evidence type="ECO:0000255" key="1">
    <source>
        <dbReference type="HAMAP-Rule" id="MF_01208"/>
    </source>
</evidence>
<sequence length="210" mass="22715">MKKEIASHLLEIGAVFLQPNDPFTWSSGMKSPIYCDNRLTLSYPKVRQAIAAGLEELIKEHFPTVEIIAGTATAGIAHAAWVSDRMDLPMCYVRSKAKGHGKGNQIEGKAEKGQKVVVVEDLISTGGSAITCVEALREAGCEVLGIVSIFTYELEAGKEKLEAANVASYSLSDYSALTEVAAEKGMIGQAETKKLQEWRKNPANEAWITA</sequence>
<comment type="function">
    <text evidence="1">Catalyzes the transfer of a ribosyl phosphate group from 5-phosphoribose 1-diphosphate to orotate, leading to the formation of orotidine monophosphate (OMP).</text>
</comment>
<comment type="catalytic activity">
    <reaction evidence="1">
        <text>orotidine 5'-phosphate + diphosphate = orotate + 5-phospho-alpha-D-ribose 1-diphosphate</text>
        <dbReference type="Rhea" id="RHEA:10380"/>
        <dbReference type="ChEBI" id="CHEBI:30839"/>
        <dbReference type="ChEBI" id="CHEBI:33019"/>
        <dbReference type="ChEBI" id="CHEBI:57538"/>
        <dbReference type="ChEBI" id="CHEBI:58017"/>
        <dbReference type="EC" id="2.4.2.10"/>
    </reaction>
</comment>
<comment type="cofactor">
    <cofactor evidence="1">
        <name>Mg(2+)</name>
        <dbReference type="ChEBI" id="CHEBI:18420"/>
    </cofactor>
</comment>
<comment type="pathway">
    <text evidence="1">Pyrimidine metabolism; UMP biosynthesis via de novo pathway; UMP from orotate: step 1/2.</text>
</comment>
<comment type="subunit">
    <text evidence="1">Homodimer.</text>
</comment>
<comment type="similarity">
    <text evidence="1">Belongs to the purine/pyrimidine phosphoribosyltransferase family. PyrE subfamily.</text>
</comment>